<sequence length="402" mass="43774">MTVTLCSPTEDDWPGMFLLAAASFTDFIGPESATAWRTLVPTDGAVVVRDGAGPGSEVVGMALYMDLRLAVPGEVVLPTAGLSFVAVAPTHRRRGLLRAMCAELHRRIADSGYPVAALHASEGGIYGRFGYGPATTLHELTVDRRFARFHADAPGGGLGGSSVRLVRPTEHRGEFEAIYERWRQQVPGGLLRPQVLWDELLAECKAAPGGDRESFALLHPDGYALYRVDRTDLKLARVSELRAVTADAHCALWRALIGLDSMERISIITHPQDPLPHLLTDTRLARTTWRQDGLWLRIMNVPAALEARGYAHEVGEFSTVLEVSDGGRFALKIGDGRARCTPTDAAAEIEMDRDVLGSLYLGAHRASTLAAANRLRTKDSQLLRRLDAAFASDVPVQTAFEF</sequence>
<evidence type="ECO:0000255" key="1">
    <source>
        <dbReference type="HAMAP-Rule" id="MF_01812"/>
    </source>
</evidence>
<evidence type="ECO:0000305" key="2"/>
<name>EIS_MYCBO</name>
<reference key="1">
    <citation type="journal article" date="2003" name="Proc. Natl. Acad. Sci. U.S.A.">
        <title>The complete genome sequence of Mycobacterium bovis.</title>
        <authorList>
            <person name="Garnier T."/>
            <person name="Eiglmeier K."/>
            <person name="Camus J.-C."/>
            <person name="Medina N."/>
            <person name="Mansoor H."/>
            <person name="Pryor M."/>
            <person name="Duthoy S."/>
            <person name="Grondin S."/>
            <person name="Lacroix C."/>
            <person name="Monsempe C."/>
            <person name="Simon S."/>
            <person name="Harris B."/>
            <person name="Atkin R."/>
            <person name="Doggett J."/>
            <person name="Mayes R."/>
            <person name="Keating L."/>
            <person name="Wheeler P.R."/>
            <person name="Parkhill J."/>
            <person name="Barrell B.G."/>
            <person name="Cole S.T."/>
            <person name="Gordon S.V."/>
            <person name="Hewinson R.G."/>
        </authorList>
    </citation>
    <scope>NUCLEOTIDE SEQUENCE [LARGE SCALE GENOMIC DNA]</scope>
    <source>
        <strain>ATCC BAA-935 / AF2122/97</strain>
    </source>
</reference>
<reference key="2">
    <citation type="journal article" date="2017" name="Genome Announc.">
        <title>Updated reference genome sequence and annotation of Mycobacterium bovis AF2122/97.</title>
        <authorList>
            <person name="Malone K.M."/>
            <person name="Farrell D."/>
            <person name="Stuber T.P."/>
            <person name="Schubert O.T."/>
            <person name="Aebersold R."/>
            <person name="Robbe-Austerman S."/>
            <person name="Gordon S.V."/>
        </authorList>
    </citation>
    <scope>NUCLEOTIDE SEQUENCE [LARGE SCALE GENOMIC DNA]</scope>
    <scope>GENOME REANNOTATION</scope>
    <source>
        <strain>ATCC BAA-935 / AF2122/97</strain>
    </source>
</reference>
<reference key="3">
    <citation type="journal article" date="2000" name="J. Bacteriol.">
        <title>Identification of a Mycobacterium tuberculosis gene that enhances mycobacterial survival in macrophages.</title>
        <authorList>
            <person name="Wei J."/>
            <person name="Dahl J."/>
            <person name="Moulder J.W."/>
            <person name="Roberts E.A."/>
            <person name="O'Gaora P."/>
            <person name="Young D.B."/>
            <person name="Friedman R.L."/>
        </authorList>
    </citation>
    <scope>IDENTIFICATION</scope>
</reference>
<protein>
    <recommendedName>
        <fullName evidence="1">N-acetyltransferase Eis</fullName>
        <ecNumber evidence="1">2.3.1.-</ecNumber>
    </recommendedName>
    <alternativeName>
        <fullName evidence="1">Enhanced intracellular survival protein</fullName>
    </alternativeName>
    <alternativeName>
        <fullName evidence="1">Protein-lysine N-acetyltransferase</fullName>
    </alternativeName>
</protein>
<organism>
    <name type="scientific">Mycobacterium bovis (strain ATCC BAA-935 / AF2122/97)</name>
    <dbReference type="NCBI Taxonomy" id="233413"/>
    <lineage>
        <taxon>Bacteria</taxon>
        <taxon>Bacillati</taxon>
        <taxon>Actinomycetota</taxon>
        <taxon>Actinomycetes</taxon>
        <taxon>Mycobacteriales</taxon>
        <taxon>Mycobacteriaceae</taxon>
        <taxon>Mycobacterium</taxon>
        <taxon>Mycobacterium tuberculosis complex</taxon>
    </lineage>
</organism>
<accession>P59772</accession>
<accession>A0A1R3Y3C0</accession>
<accession>X2BKM2</accession>
<proteinExistence type="inferred from homology"/>
<feature type="chain" id="PRO_0000220261" description="N-acetyltransferase Eis">
    <location>
        <begin position="1"/>
        <end position="402"/>
    </location>
</feature>
<feature type="domain" description="N-acetyltransferase" evidence="1">
    <location>
        <begin position="3"/>
        <end position="154"/>
    </location>
</feature>
<feature type="active site" description="Proton donor" evidence="1">
    <location>
        <position position="126"/>
    </location>
</feature>
<feature type="active site" description="Proton acceptor; via carboxylate" evidence="1">
    <location>
        <position position="402"/>
    </location>
</feature>
<feature type="binding site" evidence="1">
    <location>
        <begin position="85"/>
        <end position="87"/>
    </location>
    <ligand>
        <name>acetyl-CoA</name>
        <dbReference type="ChEBI" id="CHEBI:57288"/>
    </ligand>
</feature>
<feature type="binding site" evidence="1">
    <location>
        <begin position="93"/>
        <end position="98"/>
    </location>
    <ligand>
        <name>acetyl-CoA</name>
        <dbReference type="ChEBI" id="CHEBI:57288"/>
    </ligand>
</feature>
<feature type="binding site" evidence="1">
    <location>
        <begin position="121"/>
        <end position="122"/>
    </location>
    <ligand>
        <name>acetyl-CoA</name>
        <dbReference type="ChEBI" id="CHEBI:57288"/>
    </ligand>
</feature>
<comment type="function">
    <text evidence="1">Effector that is released into the host cell and affects host immune responses. Acts as an acetyltransferase that acetylates lysine residues of host proteins.</text>
</comment>
<comment type="catalytic activity">
    <reaction evidence="1">
        <text>L-lysyl-[protein] + acetyl-CoA = N(6)-acetyl-L-lysyl-[protein] + CoA + H(+)</text>
        <dbReference type="Rhea" id="RHEA:45948"/>
        <dbReference type="Rhea" id="RHEA-COMP:9752"/>
        <dbReference type="Rhea" id="RHEA-COMP:10731"/>
        <dbReference type="ChEBI" id="CHEBI:15378"/>
        <dbReference type="ChEBI" id="CHEBI:29969"/>
        <dbReference type="ChEBI" id="CHEBI:57287"/>
        <dbReference type="ChEBI" id="CHEBI:57288"/>
        <dbReference type="ChEBI" id="CHEBI:61930"/>
    </reaction>
</comment>
<comment type="subunit">
    <text evidence="1">Homohexamer; trimer of dimers.</text>
</comment>
<comment type="subcellular location">
    <subcellularLocation>
        <location evidence="1">Secreted</location>
    </subcellularLocation>
    <subcellularLocation>
        <location evidence="1">Host cytoplasmic vesicle</location>
        <location evidence="1">Host phagosome</location>
    </subcellularLocation>
    <subcellularLocation>
        <location evidence="1">Extracellular vesicle</location>
        <location evidence="1">Bacterial extracellular vesicle</location>
    </subcellularLocation>
    <subcellularLocation>
        <location evidence="1">Host extracellular space</location>
    </subcellularLocation>
</comment>
<comment type="similarity">
    <text evidence="1">Belongs to the acetyltransferase Eis family.</text>
</comment>
<comment type="sequence caution" evidence="2">
    <conflict type="erroneous initiation">
        <sequence resource="EMBL-CDS" id="SIU01054"/>
    </conflict>
    <text>Extended N-terminus.</text>
</comment>
<keyword id="KW-0012">Acyltransferase</keyword>
<keyword id="KW-1036">Host cytoplasmic vesicle</keyword>
<keyword id="KW-1185">Reference proteome</keyword>
<keyword id="KW-0964">Secreted</keyword>
<keyword id="KW-0808">Transferase</keyword>
<dbReference type="EC" id="2.3.1.-" evidence="1"/>
<dbReference type="EMBL" id="LT708304">
    <property type="protein sequence ID" value="SIU01054.1"/>
    <property type="status" value="ALT_INIT"/>
    <property type="molecule type" value="Genomic_DNA"/>
</dbReference>
<dbReference type="RefSeq" id="NP_856088.1">
    <property type="nucleotide sequence ID" value="NC_002945.3"/>
</dbReference>
<dbReference type="SMR" id="P59772"/>
<dbReference type="KEGG" id="mbo:BQ2027_MB2439C"/>
<dbReference type="PATRIC" id="fig|233413.5.peg.2685"/>
<dbReference type="Proteomes" id="UP000001419">
    <property type="component" value="Chromosome"/>
</dbReference>
<dbReference type="GO" id="GO:0097691">
    <property type="term" value="C:bacterial extracellular vesicle"/>
    <property type="evidence" value="ECO:0007669"/>
    <property type="project" value="UniProtKB-SubCell"/>
</dbReference>
<dbReference type="GO" id="GO:0044161">
    <property type="term" value="C:host cell cytoplasmic vesicle"/>
    <property type="evidence" value="ECO:0007669"/>
    <property type="project" value="UniProtKB-SubCell"/>
</dbReference>
<dbReference type="GO" id="GO:0043655">
    <property type="term" value="C:host extracellular space"/>
    <property type="evidence" value="ECO:0007669"/>
    <property type="project" value="UniProtKB-SubCell"/>
</dbReference>
<dbReference type="GO" id="GO:0034069">
    <property type="term" value="F:aminoglycoside N-acetyltransferase activity"/>
    <property type="evidence" value="ECO:0007669"/>
    <property type="project" value="TreeGrafter"/>
</dbReference>
<dbReference type="GO" id="GO:0061733">
    <property type="term" value="F:protein-lysine-acetyltransferase activity"/>
    <property type="evidence" value="ECO:0007669"/>
    <property type="project" value="RHEA"/>
</dbReference>
<dbReference type="GO" id="GO:0030649">
    <property type="term" value="P:aminoglycoside antibiotic catabolic process"/>
    <property type="evidence" value="ECO:0007669"/>
    <property type="project" value="TreeGrafter"/>
</dbReference>
<dbReference type="CDD" id="cd04301">
    <property type="entry name" value="NAT_SF"/>
    <property type="match status" value="1"/>
</dbReference>
<dbReference type="FunFam" id="3.30.1050.10:FF:000008">
    <property type="entry name" value="N-acetyltransferase Eis"/>
    <property type="match status" value="1"/>
</dbReference>
<dbReference type="FunFam" id="3.40.630.30:FF:000112">
    <property type="entry name" value="N-acetyltransferase Eis"/>
    <property type="match status" value="1"/>
</dbReference>
<dbReference type="Gene3D" id="3.40.630.30">
    <property type="match status" value="2"/>
</dbReference>
<dbReference type="Gene3D" id="3.30.1050.10">
    <property type="entry name" value="SCP2 sterol-binding domain"/>
    <property type="match status" value="1"/>
</dbReference>
<dbReference type="HAMAP" id="MF_01812">
    <property type="entry name" value="Eis"/>
    <property type="match status" value="1"/>
</dbReference>
<dbReference type="InterPro" id="IPR041380">
    <property type="entry name" value="Acetyltransf_17"/>
</dbReference>
<dbReference type="InterPro" id="IPR051554">
    <property type="entry name" value="Acetyltransferase_Eis"/>
</dbReference>
<dbReference type="InterPro" id="IPR016181">
    <property type="entry name" value="Acyl_CoA_acyltransferase"/>
</dbReference>
<dbReference type="InterPro" id="IPR025559">
    <property type="entry name" value="Eis_dom"/>
</dbReference>
<dbReference type="InterPro" id="IPR000182">
    <property type="entry name" value="GNAT_dom"/>
</dbReference>
<dbReference type="InterPro" id="IPR022902">
    <property type="entry name" value="NAcTrfase_Eis"/>
</dbReference>
<dbReference type="InterPro" id="IPR036527">
    <property type="entry name" value="SCP2_sterol-bd_dom_sf"/>
</dbReference>
<dbReference type="NCBIfam" id="NF002364">
    <property type="entry name" value="PRK01346.1-1"/>
    <property type="match status" value="1"/>
</dbReference>
<dbReference type="NCBIfam" id="NF002367">
    <property type="entry name" value="PRK01346.1-4"/>
    <property type="match status" value="1"/>
</dbReference>
<dbReference type="PANTHER" id="PTHR37817">
    <property type="entry name" value="N-ACETYLTRANSFERASE EIS"/>
    <property type="match status" value="1"/>
</dbReference>
<dbReference type="PANTHER" id="PTHR37817:SF1">
    <property type="entry name" value="N-ACETYLTRANSFERASE EIS"/>
    <property type="match status" value="1"/>
</dbReference>
<dbReference type="Pfam" id="PF17668">
    <property type="entry name" value="Acetyltransf_17"/>
    <property type="match status" value="1"/>
</dbReference>
<dbReference type="Pfam" id="PF13527">
    <property type="entry name" value="Acetyltransf_9"/>
    <property type="match status" value="1"/>
</dbReference>
<dbReference type="Pfam" id="PF13530">
    <property type="entry name" value="SCP2_2"/>
    <property type="match status" value="1"/>
</dbReference>
<dbReference type="SUPFAM" id="SSF55729">
    <property type="entry name" value="Acyl-CoA N-acyltransferases (Nat)"/>
    <property type="match status" value="1"/>
</dbReference>
<dbReference type="SUPFAM" id="SSF55718">
    <property type="entry name" value="SCP-like"/>
    <property type="match status" value="1"/>
</dbReference>
<dbReference type="PROSITE" id="PS51186">
    <property type="entry name" value="GNAT"/>
    <property type="match status" value="1"/>
</dbReference>
<gene>
    <name evidence="1" type="primary">eis</name>
    <name type="ordered locus">BQ2027_MB2439C</name>
</gene>